<accession>Q80XB4</accession>
<accession>E9QN76</accession>
<accession>O35884</accession>
<accession>Q3UTY7</accession>
<accession>Q3UU10</accession>
<accession>Q80V40</accession>
<feature type="chain" id="PRO_0000248859" description="Nebulin-related-anchoring protein">
    <location>
        <begin position="1"/>
        <end position="1728"/>
    </location>
</feature>
<feature type="domain" description="LIM zinc-binding" evidence="3">
    <location>
        <begin position="4"/>
        <end position="64"/>
    </location>
</feature>
<feature type="repeat" description="Nebulin 1" evidence="2">
    <location>
        <begin position="173"/>
        <end position="200"/>
    </location>
</feature>
<feature type="repeat" description="Nebulin 2" evidence="2">
    <location>
        <begin position="201"/>
        <end position="235"/>
    </location>
</feature>
<feature type="repeat" description="Nebulin 3" evidence="2">
    <location>
        <begin position="244"/>
        <end position="271"/>
    </location>
</feature>
<feature type="repeat" description="Nebulin 4" evidence="2">
    <location>
        <begin position="313"/>
        <end position="340"/>
    </location>
</feature>
<feature type="repeat" description="Nebulin 5" evidence="2">
    <location>
        <begin position="345"/>
        <end position="379"/>
    </location>
</feature>
<feature type="repeat" description="Nebulin 6" evidence="2">
    <location>
        <begin position="386"/>
        <end position="414"/>
    </location>
</feature>
<feature type="repeat" description="Nebulin 7" evidence="2">
    <location>
        <begin position="416"/>
        <end position="450"/>
    </location>
</feature>
<feature type="repeat" description="Nebulin 8" evidence="2">
    <location>
        <begin position="484"/>
        <end position="518"/>
    </location>
</feature>
<feature type="repeat" description="Nebulin 9" evidence="2">
    <location>
        <begin position="519"/>
        <end position="553"/>
    </location>
</feature>
<feature type="repeat" description="Nebulin 10" evidence="2">
    <location>
        <begin position="555"/>
        <end position="589"/>
    </location>
</feature>
<feature type="repeat" description="Nebulin 11" evidence="2">
    <location>
        <begin position="599"/>
        <end position="623"/>
    </location>
</feature>
<feature type="repeat" description="Nebulin 12" evidence="2">
    <location>
        <begin position="624"/>
        <end position="658"/>
    </location>
</feature>
<feature type="repeat" description="Nebulin 13" evidence="2">
    <location>
        <begin position="659"/>
        <end position="689"/>
    </location>
</feature>
<feature type="repeat" description="Nebulin 14" evidence="2">
    <location>
        <begin position="699"/>
        <end position="721"/>
    </location>
</feature>
<feature type="repeat" description="Nebulin 15" evidence="2">
    <location>
        <begin position="723"/>
        <end position="757"/>
    </location>
</feature>
<feature type="repeat" description="Nebulin 16" evidence="2">
    <location>
        <begin position="758"/>
        <end position="792"/>
    </location>
</feature>
<feature type="repeat" description="Nebulin 17" evidence="2">
    <location>
        <begin position="794"/>
        <end position="828"/>
    </location>
</feature>
<feature type="repeat" description="Nebulin 18" evidence="2">
    <location>
        <begin position="841"/>
        <end position="866"/>
    </location>
</feature>
<feature type="repeat" description="Nebulin 19" evidence="2">
    <location>
        <begin position="867"/>
        <end position="893"/>
    </location>
</feature>
<feature type="repeat" description="Nebulin 20" evidence="2">
    <location>
        <begin position="898"/>
        <end position="932"/>
    </location>
</feature>
<feature type="repeat" description="Nebulin 21" evidence="2">
    <location>
        <begin position="943"/>
        <end position="960"/>
    </location>
</feature>
<feature type="repeat" description="Nebulin 22" evidence="2">
    <location>
        <begin position="966"/>
        <end position="1000"/>
    </location>
</feature>
<feature type="repeat" description="Nebulin 23" evidence="2">
    <location>
        <begin position="1001"/>
        <end position="1035"/>
    </location>
</feature>
<feature type="repeat" description="Nebulin 24" evidence="2">
    <location>
        <begin position="1037"/>
        <end position="1071"/>
    </location>
</feature>
<feature type="repeat" description="Nebulin 25" evidence="2">
    <location>
        <begin position="1075"/>
        <end position="1109"/>
    </location>
</feature>
<feature type="repeat" description="Nebulin 26" evidence="2">
    <location>
        <begin position="1110"/>
        <end position="1136"/>
    </location>
</feature>
<feature type="repeat" description="Nebulin 27" evidence="2">
    <location>
        <begin position="1141"/>
        <end position="1175"/>
    </location>
</feature>
<feature type="repeat" description="Nebulin 28" evidence="2">
    <location>
        <begin position="1180"/>
        <end position="1203"/>
    </location>
</feature>
<feature type="repeat" description="Nebulin 29" evidence="2">
    <location>
        <begin position="1209"/>
        <end position="1243"/>
    </location>
</feature>
<feature type="repeat" description="Nebulin 30" evidence="2">
    <location>
        <begin position="1244"/>
        <end position="1278"/>
    </location>
</feature>
<feature type="repeat" description="Nebulin 31" evidence="2">
    <location>
        <begin position="1280"/>
        <end position="1314"/>
    </location>
</feature>
<feature type="repeat" description="Nebulin 32" evidence="2">
    <location>
        <begin position="1318"/>
        <end position="1352"/>
    </location>
</feature>
<feature type="repeat" description="Nebulin 33" evidence="2">
    <location>
        <begin position="1353"/>
        <end position="1379"/>
    </location>
</feature>
<feature type="repeat" description="Nebulin 34" evidence="2">
    <location>
        <begin position="1384"/>
        <end position="1418"/>
    </location>
</feature>
<feature type="repeat" description="Nebulin 35" evidence="2">
    <location>
        <begin position="1425"/>
        <end position="1446"/>
    </location>
</feature>
<feature type="repeat" description="Nebulin 36" evidence="2">
    <location>
        <begin position="1452"/>
        <end position="1478"/>
    </location>
</feature>
<feature type="repeat" description="Nebulin 37" evidence="2">
    <location>
        <begin position="1487"/>
        <end position="1521"/>
    </location>
</feature>
<feature type="repeat" description="Nebulin 38" evidence="2">
    <location>
        <begin position="1523"/>
        <end position="1557"/>
    </location>
</feature>
<feature type="repeat" description="Nebulin 39" evidence="2">
    <location>
        <begin position="1561"/>
        <end position="1595"/>
    </location>
</feature>
<feature type="repeat" description="Nebulin 40" evidence="2">
    <location>
        <begin position="1596"/>
        <end position="1630"/>
    </location>
</feature>
<feature type="repeat" description="Nebulin 41" evidence="2">
    <location>
        <begin position="1637"/>
        <end position="1661"/>
    </location>
</feature>
<feature type="modified residue" description="Phosphothreonine" evidence="20">
    <location>
        <position position="203"/>
    </location>
</feature>
<feature type="modified residue" description="Phosphoserine" evidence="20">
    <location>
        <position position="1078"/>
    </location>
</feature>
<feature type="splice variant" id="VSP_052159" description="In isoform 4." evidence="12">
    <location>
        <begin position="1"/>
        <end position="82"/>
    </location>
</feature>
<feature type="splice variant" id="VSP_052160" description="In isoform 2, isoform 3 and isoform 4." evidence="11 12 13">
    <location>
        <begin position="368"/>
        <end position="402"/>
    </location>
</feature>
<feature type="splice variant" id="VSP_052162" description="In isoform 3." evidence="13">
    <location>
        <begin position="1443"/>
        <end position="1650"/>
    </location>
</feature>
<feature type="sequence conflict" description="In Ref. 1; AAC53323." evidence="14" ref="1">
    <original>K</original>
    <variation>M</variation>
    <location>
        <position position="51"/>
    </location>
</feature>
<feature type="sequence conflict" description="In Ref. 2; AAO47075." evidence="14" ref="2">
    <original>G</original>
    <variation>R</variation>
    <location>
        <position position="85"/>
    </location>
</feature>
<feature type="sequence conflict" description="In Ref. 1; AAC53323." evidence="14" ref="1">
    <original>A</original>
    <variation>T</variation>
    <location>
        <position position="109"/>
    </location>
</feature>
<feature type="sequence conflict" description="In Ref. 1; AAC53323." evidence="14" ref="1">
    <original>P</original>
    <variation>A</variation>
    <location>
        <position position="209"/>
    </location>
</feature>
<feature type="sequence conflict" description="In Ref. 1; AAC53323." evidence="14" ref="1">
    <original>N</original>
    <variation>T</variation>
    <location>
        <position position="318"/>
    </location>
</feature>
<feature type="sequence conflict" description="In Ref. 1; AAC53323." evidence="14" ref="1">
    <original>V</original>
    <variation>A</variation>
    <location>
        <position position="908"/>
    </location>
</feature>
<feature type="sequence conflict" description="In Ref. 2; AAO47076." evidence="14" ref="2">
    <original>R</original>
    <variation>G</variation>
    <location>
        <position position="924"/>
    </location>
</feature>
<feature type="sequence conflict" description="In Ref. 2; AAO47076." evidence="14" ref="2">
    <original>K</original>
    <variation>E</variation>
    <location>
        <position position="956"/>
    </location>
</feature>
<feature type="sequence conflict" description="In Ref. 2; AAO47075." evidence="14" ref="2">
    <original>H</original>
    <variation>R</variation>
    <location>
        <position position="1158"/>
    </location>
</feature>
<feature type="sequence conflict" description="In Ref. 1; AAC53323." evidence="14" ref="1">
    <original>H</original>
    <variation>R</variation>
    <location>
        <position position="1383"/>
    </location>
</feature>
<gene>
    <name evidence="19" type="primary">Nrap</name>
</gene>
<evidence type="ECO:0000250" key="1">
    <source>
        <dbReference type="UniProtKB" id="Q86VF7"/>
    </source>
</evidence>
<evidence type="ECO:0000255" key="2"/>
<evidence type="ECO:0000255" key="3">
    <source>
        <dbReference type="PROSITE-ProRule" id="PRU00125"/>
    </source>
</evidence>
<evidence type="ECO:0000269" key="4">
    <source>
    </source>
</evidence>
<evidence type="ECO:0000269" key="5">
    <source>
    </source>
</evidence>
<evidence type="ECO:0000269" key="6">
    <source>
    </source>
</evidence>
<evidence type="ECO:0000269" key="7">
    <source>
    </source>
</evidence>
<evidence type="ECO:0000269" key="8">
    <source>
    </source>
</evidence>
<evidence type="ECO:0000269" key="9">
    <source>
    </source>
</evidence>
<evidence type="ECO:0000269" key="10">
    <source>
    </source>
</evidence>
<evidence type="ECO:0000303" key="11">
    <source>
    </source>
</evidence>
<evidence type="ECO:0000303" key="12">
    <source>
    </source>
</evidence>
<evidence type="ECO:0000303" key="13">
    <source>
    </source>
</evidence>
<evidence type="ECO:0000305" key="14"/>
<evidence type="ECO:0000312" key="15">
    <source>
        <dbReference type="EMBL" id="AAC53323.1"/>
    </source>
</evidence>
<evidence type="ECO:0000312" key="16">
    <source>
        <dbReference type="EMBL" id="AAO47075.1"/>
    </source>
</evidence>
<evidence type="ECO:0000312" key="17">
    <source>
        <dbReference type="EMBL" id="AAO47076.1"/>
    </source>
</evidence>
<evidence type="ECO:0000312" key="18">
    <source>
        <dbReference type="EMBL" id="BAE23819.1"/>
    </source>
</evidence>
<evidence type="ECO:0000312" key="19">
    <source>
        <dbReference type="MGI" id="MGI:1098765"/>
    </source>
</evidence>
<evidence type="ECO:0007744" key="20">
    <source>
    </source>
</evidence>
<proteinExistence type="evidence at protein level"/>
<name>NRAP_MOUSE</name>
<organism>
    <name type="scientific">Mus musculus</name>
    <name type="common">Mouse</name>
    <dbReference type="NCBI Taxonomy" id="10090"/>
    <lineage>
        <taxon>Eukaryota</taxon>
        <taxon>Metazoa</taxon>
        <taxon>Chordata</taxon>
        <taxon>Craniata</taxon>
        <taxon>Vertebrata</taxon>
        <taxon>Euteleostomi</taxon>
        <taxon>Mammalia</taxon>
        <taxon>Eutheria</taxon>
        <taxon>Euarchontoglires</taxon>
        <taxon>Glires</taxon>
        <taxon>Rodentia</taxon>
        <taxon>Myomorpha</taxon>
        <taxon>Muroidea</taxon>
        <taxon>Muridae</taxon>
        <taxon>Murinae</taxon>
        <taxon>Mus</taxon>
        <taxon>Mus</taxon>
    </lineage>
</organism>
<sequence length="1728" mass="195756">MNVQACSRCGYGVYPAEKISCIDQTWHKACFHCEVCKMMLSVNNFVSHQKKPYCHAHNPKNNTFTSVYHTPLNLTLKKSVAAMGGIDGKEDGEPFKSVLHWDMKSKAGAGAASRLMNERDYWPGYAEGNTWCPGALPDPEIVRMVEARQSLGEGYTEDREQQQGKGSFPAMITPAYQRAKAANQLASQVQYKRGHDERVSTFTPVADTPELLRAKAGGQLQNDVRYTEDGGQQRGKGSFPAMITPAYQIAKRATELASDVRYHQQYHREMKGMASPVGAEGGMTKDSVDRCGQVYSEECDEPRGKGSFPAMITPAYQNAKKANELVSDIKYRQDFHKMKGAAHFHSLAAQDNLVLKRAQSVSKLVSEVEYKKGLENSKGHSINYCETPQFRNVSKISKFTSDNKYKENYQTQLRGHYDGVGMDRRMLHALKVGSLASNVAYKADYKHDVVDYNYLATATPFYQTTMRLVPLKDVNYRQNIDRMKFSSVTNTPQIVQAKINAQQLSHVNYRADYERNKLNYTLPQDAPQLLKAKANAELFSEVKYKEGWQKTKGKGFEMKLDAMSLLAAKASGELASSVKYKEEYEKMKGRALGATDSKLLHSLQVAKMSSEVEYKKGFEESKTHFNLPMDMVNLRHAKKAQALASDLDYRKKLHDYTVLPEDMKTQWAKKAYGLQSELQYKADLAWMRGVGWLTEGSLNLEQAKKAGQLISEKNYRQRVDELKFTSVADSSQMEHAKKSQGLQNAVAYKAGNEQSVHQYTISKDEPLFLRARANAAQLSETLYKSSWEKQKAKGFELRLDSLAFLTAKAKRDLASEVKYKEDYERSRGKLIGAKSAQGDSQMSHSLQMSKLQSDLEYKKGFEDTRSQCHISLDMVHLVHARQAQHLATDVGYRTASHCFTALPTDMKVEWAKKAYGLQSDNQYRADMKWMKGTGWVATGSLHVEQAKKAGELISEKKYRQHPDALKFTSIKDTPEMVQARISYTQAVDRLYREQGENVKHHYTQTADLPEVLLAKLNAMNISETRYKESWSRLRDGGYKLRLDALPFQAAKASSEVISDYKYKEAFERMKGQMLGSRSLEDDLSLAHSVHATSLQSDVNYKKGFEHAKAHFHLPLDMVTLVHAKKAQTLASDQDYRHPLPQHTVLAEDLRLSCAKKAHKLQSENLYRSDLNFMRGVPCVVPGTLEIEGRKKASELISESKYRQHPGSFKYTAVTDTPNLLHAKYSNQITNERLYKAAGEDARHQYTMTLGLPEFIRAKTNAANLSEAKYKEAWHNLRAQGYKLTIDALPFQAARASGDIASDFLYRHEFVKERGQLIGVRNVSDDPRLLHCLRMGQLQSENQYRKEAASSQAQCHLPMDMMYLVHARKAQALASDHDYRTQCHEFTALPEDLKMAWAKKAHALQSEFRYKADLMGMKGTGWLALQSPQIESAKKAGDLISETKYRKKPDSIKFTTVVDSPDLIHAKESYMHCNERLYRLGDAASLHRYTPIPDHPDFTRARMNAMHLSDKVYRNAWEQSRAGGYDFRLDAIPFQTARVSRDIASDFRYKEAFLRDRGLQIGYRSISDDPRTTHFLRVGRLQSDNEYRKAFAKGRSQFHSRADQPGFLQAKRSQQLASDVLYRQPLPQHTSDPEQLGLKHARKAHQLQSDVKYKSDLNLTRGVGWTPPGSYKVEMARRAAELANRRGPGIRGASVEPEAAAALGDHQSRGVNPDASEILHIHKKKTLLM</sequence>
<comment type="function">
    <text evidence="4 5 10">May be involved in anchoring the terminal actin filaments in the myofibril to the membrane and in transmitting tension from the myofibrils to the extracellular matrix.</text>
</comment>
<comment type="subunit">
    <text evidence="1 4 5 6 10">Interacts with actin, alpha-actinin, KLHL41, TLN1 and VCL. Interacts with CSRP3.</text>
</comment>
<comment type="subcellular location">
    <text evidence="5 8 10">Localized at the myotendinous junction in skeletal muscle and at the intercalated disk in cardiac muscle.</text>
</comment>
<comment type="alternative products">
    <event type="alternative splicing"/>
    <isoform>
        <id>Q80XB4-1</id>
        <name evidence="7">1</name>
        <name evidence="7">S</name>
        <sequence type="displayed"/>
    </isoform>
    <isoform>
        <id>Q80XB4-2</id>
        <name evidence="7">2</name>
        <name evidence="7">C</name>
        <sequence type="described" ref="VSP_052160"/>
    </isoform>
    <isoform>
        <id>Q80XB4-3</id>
        <name evidence="10">3</name>
        <sequence type="described" ref="VSP_052160 VSP_052162"/>
    </isoform>
    <isoform>
        <id>Q80XB4-4</id>
        <name evidence="9">4</name>
        <sequence type="described" ref="VSP_052159 VSP_052160"/>
    </isoform>
</comment>
<comment type="tissue specificity">
    <text evidence="5 10">Expressed in cardiac and skeletal muscle. Not detected in kidney, spleen, liver, brain, lung, stomach or uterus.</text>
</comment>
<comment type="developmental stage">
    <text evidence="8">Expression significantly increased from 10.5 dpc to 16.5 dpc, and subsequently remained constant until 21 days after birth. In 9.5 dpc to 10.5 dpc embryonic heart, expression is primarily associated with developing premyofibril structures containing alpha-actinin.</text>
</comment>
<comment type="sequence caution" evidence="14">
    <conflict type="frameshift">
        <sequence resource="EMBL-CDS" id="AAC53323"/>
    </conflict>
</comment>
<protein>
    <recommendedName>
        <fullName>Nebulin-related-anchoring protein</fullName>
        <shortName>N-RAP</shortName>
    </recommendedName>
</protein>
<keyword id="KW-0009">Actin-binding</keyword>
<keyword id="KW-0025">Alternative splicing</keyword>
<keyword id="KW-0440">LIM domain</keyword>
<keyword id="KW-0479">Metal-binding</keyword>
<keyword id="KW-0597">Phosphoprotein</keyword>
<keyword id="KW-1185">Reference proteome</keyword>
<keyword id="KW-0677">Repeat</keyword>
<keyword id="KW-0862">Zinc</keyword>
<reference evidence="14 15" key="1">
    <citation type="journal article" date="1997" name="Cell Motil. Cytoskeleton">
        <title>Complete cDNA sequence and tissue localization of N-RAP, a novel nebulin-related protein of striated muscle.</title>
        <authorList>
            <person name="Luo G."/>
            <person name="Zhang J.Q."/>
            <person name="Nguyen T.P."/>
            <person name="Herrera A.H."/>
            <person name="Paterson B."/>
            <person name="Horowits R."/>
        </authorList>
    </citation>
    <scope>NUCLEOTIDE SEQUENCE [MRNA] (ISOFORM 3)</scope>
    <scope>FUNCTION</scope>
    <scope>INTERACTION WITH ACTIN</scope>
    <scope>SUBCELLULAR LOCATION</scope>
    <scope>TISSUE SPECIFICITY</scope>
</reference>
<reference evidence="14 16" key="2">
    <citation type="journal article" date="2003" name="Cell Motil. Cytoskeleton">
        <title>Genomic organization, alternative splicing, and expression of human and mouse N-RAP, a nebulin-related LIM protein of striated muscle.</title>
        <authorList>
            <person name="Mohiddin S.A."/>
            <person name="Lu S."/>
            <person name="Cardoso J.-P."/>
            <person name="Carroll S."/>
            <person name="Jha S."/>
            <person name="Horowits R."/>
            <person name="Fananapazir L."/>
        </authorList>
    </citation>
    <scope>NUCLEOTIDE SEQUENCE [MRNA] (ISOFORMS 1 AND 2)</scope>
    <source>
        <strain evidence="16">C57BL/6J</strain>
        <tissue evidence="17">Heart muscle</tissue>
        <tissue evidence="16">Skeletal muscle</tissue>
    </source>
</reference>
<reference key="3">
    <citation type="journal article" date="2009" name="PLoS Biol.">
        <title>Lineage-specific biology revealed by a finished genome assembly of the mouse.</title>
        <authorList>
            <person name="Church D.M."/>
            <person name="Goodstadt L."/>
            <person name="Hillier L.W."/>
            <person name="Zody M.C."/>
            <person name="Goldstein S."/>
            <person name="She X."/>
            <person name="Bult C.J."/>
            <person name="Agarwala R."/>
            <person name="Cherry J.L."/>
            <person name="DiCuccio M."/>
            <person name="Hlavina W."/>
            <person name="Kapustin Y."/>
            <person name="Meric P."/>
            <person name="Maglott D."/>
            <person name="Birtle Z."/>
            <person name="Marques A.C."/>
            <person name="Graves T."/>
            <person name="Zhou S."/>
            <person name="Teague B."/>
            <person name="Potamousis K."/>
            <person name="Churas C."/>
            <person name="Place M."/>
            <person name="Herschleb J."/>
            <person name="Runnheim R."/>
            <person name="Forrest D."/>
            <person name="Amos-Landgraf J."/>
            <person name="Schwartz D.C."/>
            <person name="Cheng Z."/>
            <person name="Lindblad-Toh K."/>
            <person name="Eichler E.E."/>
            <person name="Ponting C.P."/>
        </authorList>
    </citation>
    <scope>NUCLEOTIDE SEQUENCE [LARGE SCALE GENOMIC DNA]</scope>
    <source>
        <strain>C57BL/6J</strain>
    </source>
</reference>
<reference evidence="14 18" key="4">
    <citation type="journal article" date="2005" name="Science">
        <title>The transcriptional landscape of the mammalian genome.</title>
        <authorList>
            <person name="Carninci P."/>
            <person name="Kasukawa T."/>
            <person name="Katayama S."/>
            <person name="Gough J."/>
            <person name="Frith M.C."/>
            <person name="Maeda N."/>
            <person name="Oyama R."/>
            <person name="Ravasi T."/>
            <person name="Lenhard B."/>
            <person name="Wells C."/>
            <person name="Kodzius R."/>
            <person name="Shimokawa K."/>
            <person name="Bajic V.B."/>
            <person name="Brenner S.E."/>
            <person name="Batalov S."/>
            <person name="Forrest A.R."/>
            <person name="Zavolan M."/>
            <person name="Davis M.J."/>
            <person name="Wilming L.G."/>
            <person name="Aidinis V."/>
            <person name="Allen J.E."/>
            <person name="Ambesi-Impiombato A."/>
            <person name="Apweiler R."/>
            <person name="Aturaliya R.N."/>
            <person name="Bailey T.L."/>
            <person name="Bansal M."/>
            <person name="Baxter L."/>
            <person name="Beisel K.W."/>
            <person name="Bersano T."/>
            <person name="Bono H."/>
            <person name="Chalk A.M."/>
            <person name="Chiu K.P."/>
            <person name="Choudhary V."/>
            <person name="Christoffels A."/>
            <person name="Clutterbuck D.R."/>
            <person name="Crowe M.L."/>
            <person name="Dalla E."/>
            <person name="Dalrymple B.P."/>
            <person name="de Bono B."/>
            <person name="Della Gatta G."/>
            <person name="di Bernardo D."/>
            <person name="Down T."/>
            <person name="Engstrom P."/>
            <person name="Fagiolini M."/>
            <person name="Faulkner G."/>
            <person name="Fletcher C.F."/>
            <person name="Fukushima T."/>
            <person name="Furuno M."/>
            <person name="Futaki S."/>
            <person name="Gariboldi M."/>
            <person name="Georgii-Hemming P."/>
            <person name="Gingeras T.R."/>
            <person name="Gojobori T."/>
            <person name="Green R.E."/>
            <person name="Gustincich S."/>
            <person name="Harbers M."/>
            <person name="Hayashi Y."/>
            <person name="Hensch T.K."/>
            <person name="Hirokawa N."/>
            <person name="Hill D."/>
            <person name="Huminiecki L."/>
            <person name="Iacono M."/>
            <person name="Ikeo K."/>
            <person name="Iwama A."/>
            <person name="Ishikawa T."/>
            <person name="Jakt M."/>
            <person name="Kanapin A."/>
            <person name="Katoh M."/>
            <person name="Kawasawa Y."/>
            <person name="Kelso J."/>
            <person name="Kitamura H."/>
            <person name="Kitano H."/>
            <person name="Kollias G."/>
            <person name="Krishnan S.P."/>
            <person name="Kruger A."/>
            <person name="Kummerfeld S.K."/>
            <person name="Kurochkin I.V."/>
            <person name="Lareau L.F."/>
            <person name="Lazarevic D."/>
            <person name="Lipovich L."/>
            <person name="Liu J."/>
            <person name="Liuni S."/>
            <person name="McWilliam S."/>
            <person name="Madan Babu M."/>
            <person name="Madera M."/>
            <person name="Marchionni L."/>
            <person name="Matsuda H."/>
            <person name="Matsuzawa S."/>
            <person name="Miki H."/>
            <person name="Mignone F."/>
            <person name="Miyake S."/>
            <person name="Morris K."/>
            <person name="Mottagui-Tabar S."/>
            <person name="Mulder N."/>
            <person name="Nakano N."/>
            <person name="Nakauchi H."/>
            <person name="Ng P."/>
            <person name="Nilsson R."/>
            <person name="Nishiguchi S."/>
            <person name="Nishikawa S."/>
            <person name="Nori F."/>
            <person name="Ohara O."/>
            <person name="Okazaki Y."/>
            <person name="Orlando V."/>
            <person name="Pang K.C."/>
            <person name="Pavan W.J."/>
            <person name="Pavesi G."/>
            <person name="Pesole G."/>
            <person name="Petrovsky N."/>
            <person name="Piazza S."/>
            <person name="Reed J."/>
            <person name="Reid J.F."/>
            <person name="Ring B.Z."/>
            <person name="Ringwald M."/>
            <person name="Rost B."/>
            <person name="Ruan Y."/>
            <person name="Salzberg S.L."/>
            <person name="Sandelin A."/>
            <person name="Schneider C."/>
            <person name="Schoenbach C."/>
            <person name="Sekiguchi K."/>
            <person name="Semple C.A."/>
            <person name="Seno S."/>
            <person name="Sessa L."/>
            <person name="Sheng Y."/>
            <person name="Shibata Y."/>
            <person name="Shimada H."/>
            <person name="Shimada K."/>
            <person name="Silva D."/>
            <person name="Sinclair B."/>
            <person name="Sperling S."/>
            <person name="Stupka E."/>
            <person name="Sugiura K."/>
            <person name="Sultana R."/>
            <person name="Takenaka Y."/>
            <person name="Taki K."/>
            <person name="Tammoja K."/>
            <person name="Tan S.L."/>
            <person name="Tang S."/>
            <person name="Taylor M.S."/>
            <person name="Tegner J."/>
            <person name="Teichmann S.A."/>
            <person name="Ueda H.R."/>
            <person name="van Nimwegen E."/>
            <person name="Verardo R."/>
            <person name="Wei C.L."/>
            <person name="Yagi K."/>
            <person name="Yamanishi H."/>
            <person name="Zabarovsky E."/>
            <person name="Zhu S."/>
            <person name="Zimmer A."/>
            <person name="Hide W."/>
            <person name="Bult C."/>
            <person name="Grimmond S.M."/>
            <person name="Teasdale R.D."/>
            <person name="Liu E.T."/>
            <person name="Brusic V."/>
            <person name="Quackenbush J."/>
            <person name="Wahlestedt C."/>
            <person name="Mattick J.S."/>
            <person name="Hume D.A."/>
            <person name="Kai C."/>
            <person name="Sasaki D."/>
            <person name="Tomaru Y."/>
            <person name="Fukuda S."/>
            <person name="Kanamori-Katayama M."/>
            <person name="Suzuki M."/>
            <person name="Aoki J."/>
            <person name="Arakawa T."/>
            <person name="Iida J."/>
            <person name="Imamura K."/>
            <person name="Itoh M."/>
            <person name="Kato T."/>
            <person name="Kawaji H."/>
            <person name="Kawagashira N."/>
            <person name="Kawashima T."/>
            <person name="Kojima M."/>
            <person name="Kondo S."/>
            <person name="Konno H."/>
            <person name="Nakano K."/>
            <person name="Ninomiya N."/>
            <person name="Nishio T."/>
            <person name="Okada M."/>
            <person name="Plessy C."/>
            <person name="Shibata K."/>
            <person name="Shiraki T."/>
            <person name="Suzuki S."/>
            <person name="Tagami M."/>
            <person name="Waki K."/>
            <person name="Watahiki A."/>
            <person name="Okamura-Oho Y."/>
            <person name="Suzuki H."/>
            <person name="Kawai J."/>
            <person name="Hayashizaki Y."/>
        </authorList>
    </citation>
    <scope>NUCLEOTIDE SEQUENCE [LARGE SCALE MRNA] OF 1-579 (ISOFORM 4)</scope>
    <scope>NUCLEOTIDE SEQUENCE [LARGE SCALE MRNA] OF 1317-1728 (ISOFORMS 1/2/4)</scope>
    <source>
        <strain evidence="18">C57BL/6J</strain>
    </source>
</reference>
<reference evidence="14" key="5">
    <citation type="journal article" date="1999" name="Biochemistry">
        <title>Molecular interactions of N-RAP, a nebulin-related protein of striated muscle myotendon junctions and intercalated disks.</title>
        <authorList>
            <person name="Luo G."/>
            <person name="Herrera A.H."/>
            <person name="Horowits R."/>
        </authorList>
    </citation>
    <scope>FUNCTION</scope>
    <scope>INTERACTION WITH ACTIN; TLN1 AND VCL</scope>
</reference>
<reference evidence="14" key="6">
    <citation type="journal article" date="2001" name="Biochemistry">
        <title>Ultrastructural and biochemical localization of N-RAP at the interface between myofibrils and intercalated disks in the mouse heart.</title>
        <authorList>
            <person name="Zhang J.Q."/>
            <person name="Elzey B."/>
            <person name="Williams G."/>
            <person name="Lu S."/>
            <person name="Law D.J."/>
            <person name="Horowits R."/>
        </authorList>
    </citation>
    <scope>FUNCTION</scope>
    <scope>INTERACTION WITH ALPHA-ACTININ</scope>
    <scope>SUBCELLULAR LOCATION</scope>
    <scope>TISSUE SPECIFICITY</scope>
</reference>
<reference evidence="14" key="7">
    <citation type="journal article" date="2003" name="J. Cell Sci.">
        <title>New N-RAP-binding partners alpha-actinin, filamin and Krp1 detected by yeast two-hybrid screening: implications for myofibril assembly.</title>
        <authorList>
            <person name="Lu S."/>
            <person name="Carroll S.L."/>
            <person name="Herrera A.H."/>
            <person name="Ozanne B."/>
            <person name="Horowits R."/>
        </authorList>
    </citation>
    <scope>INTERACTION WITH ALPHA-ACTININ AND KLHL41</scope>
</reference>
<reference evidence="14" key="8">
    <citation type="journal article" date="2005" name="Dev. Dyn.">
        <title>N-RAP expression during mouse heart development.</title>
        <authorList>
            <person name="Lu S."/>
            <person name="Borst D.E."/>
            <person name="Horowits R."/>
        </authorList>
    </citation>
    <scope>SUBCELLULAR LOCATION</scope>
    <scope>DEVELOPMENTAL STAGE</scope>
</reference>
<reference key="9">
    <citation type="journal article" date="2010" name="Cell">
        <title>A tissue-specific atlas of mouse protein phosphorylation and expression.</title>
        <authorList>
            <person name="Huttlin E.L."/>
            <person name="Jedrychowski M.P."/>
            <person name="Elias J.E."/>
            <person name="Goswami T."/>
            <person name="Rad R."/>
            <person name="Beausoleil S.A."/>
            <person name="Villen J."/>
            <person name="Haas W."/>
            <person name="Sowa M.E."/>
            <person name="Gygi S.P."/>
        </authorList>
    </citation>
    <scope>PHOSPHORYLATION [LARGE SCALE ANALYSIS] AT THR-203 AND SER-1078</scope>
    <scope>IDENTIFICATION BY MASS SPECTROMETRY [LARGE SCALE ANALYSIS]</scope>
    <source>
        <tissue>Heart</tissue>
    </source>
</reference>
<dbReference type="EMBL" id="U76618">
    <property type="protein sequence ID" value="AAC53323.1"/>
    <property type="status" value="ALT_FRAME"/>
    <property type="molecule type" value="mRNA"/>
</dbReference>
<dbReference type="EMBL" id="AY177622">
    <property type="protein sequence ID" value="AAO47075.1"/>
    <property type="molecule type" value="mRNA"/>
</dbReference>
<dbReference type="EMBL" id="AY177623">
    <property type="protein sequence ID" value="AAO47076.1"/>
    <property type="molecule type" value="mRNA"/>
</dbReference>
<dbReference type="EMBL" id="AC115771">
    <property type="status" value="NOT_ANNOTATED_CDS"/>
    <property type="molecule type" value="Genomic_DNA"/>
</dbReference>
<dbReference type="EMBL" id="AK138925">
    <property type="protein sequence ID" value="BAE23819.1"/>
    <property type="molecule type" value="mRNA"/>
</dbReference>
<dbReference type="EMBL" id="AK138975">
    <property type="protein sequence ID" value="BAE23843.1"/>
    <property type="molecule type" value="mRNA"/>
</dbReference>
<dbReference type="CCDS" id="CCDS29913.1">
    <molecule id="Q80XB4-1"/>
</dbReference>
<dbReference type="CCDS" id="CCDS29914.1">
    <molecule id="Q80XB4-2"/>
</dbReference>
<dbReference type="PIR" id="T37192">
    <property type="entry name" value="T37192"/>
</dbReference>
<dbReference type="RefSeq" id="NP_001273481.1">
    <property type="nucleotide sequence ID" value="NM_001286552.1"/>
</dbReference>
<dbReference type="RefSeq" id="NP_001390125.1">
    <molecule id="Q80XB4-4"/>
    <property type="nucleotide sequence ID" value="NM_001403196.1"/>
</dbReference>
<dbReference type="RefSeq" id="NP_032759.3">
    <molecule id="Q80XB4-1"/>
    <property type="nucleotide sequence ID" value="NM_008733.4"/>
</dbReference>
<dbReference type="RefSeq" id="NP_932307.2">
    <molecule id="Q80XB4-2"/>
    <property type="nucleotide sequence ID" value="NM_198059.4"/>
</dbReference>
<dbReference type="RefSeq" id="XP_006526811.1">
    <property type="nucleotide sequence ID" value="XM_006526748.3"/>
</dbReference>
<dbReference type="SMR" id="Q80XB4"/>
<dbReference type="BioGRID" id="201842">
    <property type="interactions" value="8"/>
</dbReference>
<dbReference type="FunCoup" id="Q80XB4">
    <property type="interactions" value="18"/>
</dbReference>
<dbReference type="STRING" id="10090.ENSMUSP00000073228"/>
<dbReference type="GlyGen" id="Q80XB4">
    <property type="glycosylation" value="2 sites, 1 O-linked glycan (1 site)"/>
</dbReference>
<dbReference type="iPTMnet" id="Q80XB4"/>
<dbReference type="PhosphoSitePlus" id="Q80XB4"/>
<dbReference type="jPOST" id="Q80XB4"/>
<dbReference type="PaxDb" id="10090-ENSMUSP00000073228"/>
<dbReference type="ProteomicsDB" id="293891">
    <molecule id="Q80XB4-1"/>
</dbReference>
<dbReference type="ProteomicsDB" id="293892">
    <molecule id="Q80XB4-2"/>
</dbReference>
<dbReference type="ProteomicsDB" id="293893">
    <molecule id="Q80XB4-3"/>
</dbReference>
<dbReference type="ProteomicsDB" id="293894">
    <molecule id="Q80XB4-4"/>
</dbReference>
<dbReference type="Antibodypedia" id="51692">
    <property type="antibodies" value="73 antibodies from 18 providers"/>
</dbReference>
<dbReference type="DNASU" id="18175"/>
<dbReference type="Ensembl" id="ENSMUST00000040711.15">
    <molecule id="Q80XB4-2"/>
    <property type="protein sequence ID" value="ENSMUSP00000048364.9"/>
    <property type="gene ID" value="ENSMUSG00000049134.16"/>
</dbReference>
<dbReference type="Ensembl" id="ENSMUST00000073536.13">
    <molecule id="Q80XB4-1"/>
    <property type="protein sequence ID" value="ENSMUSP00000073228.7"/>
    <property type="gene ID" value="ENSMUSG00000049134.16"/>
</dbReference>
<dbReference type="Ensembl" id="ENSMUST00000095947.11">
    <molecule id="Q80XB4-4"/>
    <property type="protein sequence ID" value="ENSMUSP00000093640.5"/>
    <property type="gene ID" value="ENSMUSG00000049134.16"/>
</dbReference>
<dbReference type="GeneID" id="18175"/>
<dbReference type="KEGG" id="mmu:18175"/>
<dbReference type="UCSC" id="uc008hyu.3">
    <molecule id="Q80XB4-1"/>
    <property type="organism name" value="mouse"/>
</dbReference>
<dbReference type="UCSC" id="uc008hyv.3">
    <molecule id="Q80XB4-2"/>
    <property type="organism name" value="mouse"/>
</dbReference>
<dbReference type="UCSC" id="uc012bnr.3">
    <molecule id="Q80XB4-4"/>
    <property type="organism name" value="mouse"/>
</dbReference>
<dbReference type="AGR" id="MGI:1098765"/>
<dbReference type="CTD" id="4892"/>
<dbReference type="MGI" id="MGI:1098765">
    <property type="gene designation" value="Nrap"/>
</dbReference>
<dbReference type="VEuPathDB" id="HostDB:ENSMUSG00000049134"/>
<dbReference type="eggNOG" id="KOG1702">
    <property type="taxonomic scope" value="Eukaryota"/>
</dbReference>
<dbReference type="GeneTree" id="ENSGT00940000158418"/>
<dbReference type="HOGENOM" id="CLU_003010_1_0_1"/>
<dbReference type="InParanoid" id="Q80XB4"/>
<dbReference type="OMA" id="NERPYWT"/>
<dbReference type="OrthoDB" id="9295290at2759"/>
<dbReference type="PhylomeDB" id="Q80XB4"/>
<dbReference type="TreeFam" id="TF313758"/>
<dbReference type="BioGRID-ORCS" id="18175">
    <property type="hits" value="1 hit in 77 CRISPR screens"/>
</dbReference>
<dbReference type="ChiTaRS" id="Nrap">
    <property type="organism name" value="mouse"/>
</dbReference>
<dbReference type="PRO" id="PR:Q80XB4"/>
<dbReference type="Proteomes" id="UP000000589">
    <property type="component" value="Chromosome 19"/>
</dbReference>
<dbReference type="RNAct" id="Q80XB4">
    <property type="molecule type" value="protein"/>
</dbReference>
<dbReference type="Bgee" id="ENSMUSG00000049134">
    <property type="expression patterns" value="Expressed in tarsal region and 87 other cell types or tissues"/>
</dbReference>
<dbReference type="ExpressionAtlas" id="Q80XB4">
    <property type="expression patterns" value="baseline and differential"/>
</dbReference>
<dbReference type="GO" id="GO:0005916">
    <property type="term" value="C:fascia adherens"/>
    <property type="evidence" value="ECO:0000314"/>
    <property type="project" value="UniProtKB"/>
</dbReference>
<dbReference type="GO" id="GO:0005927">
    <property type="term" value="C:muscle tendon junction"/>
    <property type="evidence" value="ECO:0000314"/>
    <property type="project" value="UniProtKB"/>
</dbReference>
<dbReference type="GO" id="GO:0030016">
    <property type="term" value="C:myofibril"/>
    <property type="evidence" value="ECO:0000314"/>
    <property type="project" value="MGI"/>
</dbReference>
<dbReference type="GO" id="GO:0030018">
    <property type="term" value="C:Z disc"/>
    <property type="evidence" value="ECO:0007669"/>
    <property type="project" value="InterPro"/>
</dbReference>
<dbReference type="GO" id="GO:0003779">
    <property type="term" value="F:actin binding"/>
    <property type="evidence" value="ECO:0000314"/>
    <property type="project" value="UniProtKB"/>
</dbReference>
<dbReference type="GO" id="GO:0051015">
    <property type="term" value="F:actin filament binding"/>
    <property type="evidence" value="ECO:0007669"/>
    <property type="project" value="InterPro"/>
</dbReference>
<dbReference type="GO" id="GO:0046872">
    <property type="term" value="F:metal ion binding"/>
    <property type="evidence" value="ECO:0007669"/>
    <property type="project" value="UniProtKB-KW"/>
</dbReference>
<dbReference type="GO" id="GO:0051371">
    <property type="term" value="F:muscle alpha-actinin binding"/>
    <property type="evidence" value="ECO:0000314"/>
    <property type="project" value="UniProtKB"/>
</dbReference>
<dbReference type="GO" id="GO:0017166">
    <property type="term" value="F:vinculin binding"/>
    <property type="evidence" value="ECO:0000353"/>
    <property type="project" value="UniProtKB"/>
</dbReference>
<dbReference type="GO" id="GO:0030036">
    <property type="term" value="P:actin cytoskeleton organization"/>
    <property type="evidence" value="ECO:0000304"/>
    <property type="project" value="MGI"/>
</dbReference>
<dbReference type="CDD" id="cd09446">
    <property type="entry name" value="LIM_N_RAP"/>
    <property type="match status" value="1"/>
</dbReference>
<dbReference type="FunFam" id="2.10.110.10:FF:000071">
    <property type="entry name" value="nebulin-related-anchoring protein isoform X1"/>
    <property type="match status" value="1"/>
</dbReference>
<dbReference type="Gene3D" id="2.10.110.10">
    <property type="entry name" value="Cysteine Rich Protein"/>
    <property type="match status" value="1"/>
</dbReference>
<dbReference type="InterPro" id="IPR055297">
    <property type="entry name" value="NEBU/NEBL"/>
</dbReference>
<dbReference type="InterPro" id="IPR013998">
    <property type="entry name" value="Nebulin-like"/>
</dbReference>
<dbReference type="InterPro" id="IPR000900">
    <property type="entry name" value="Nebulin_repeat"/>
</dbReference>
<dbReference type="InterPro" id="IPR001781">
    <property type="entry name" value="Znf_LIM"/>
</dbReference>
<dbReference type="PANTHER" id="PTHR11039">
    <property type="entry name" value="NEBULIN"/>
    <property type="match status" value="1"/>
</dbReference>
<dbReference type="PANTHER" id="PTHR11039:SF39">
    <property type="entry name" value="NEBULIN-RELATED-ANCHORING PROTEIN"/>
    <property type="match status" value="1"/>
</dbReference>
<dbReference type="Pfam" id="PF00412">
    <property type="entry name" value="LIM"/>
    <property type="match status" value="1"/>
</dbReference>
<dbReference type="Pfam" id="PF00880">
    <property type="entry name" value="Nebulin"/>
    <property type="match status" value="16"/>
</dbReference>
<dbReference type="PRINTS" id="PR00510">
    <property type="entry name" value="NEBULIN"/>
</dbReference>
<dbReference type="SMART" id="SM00132">
    <property type="entry name" value="LIM"/>
    <property type="match status" value="1"/>
</dbReference>
<dbReference type="SMART" id="SM00227">
    <property type="entry name" value="NEBU"/>
    <property type="match status" value="42"/>
</dbReference>
<dbReference type="SUPFAM" id="SSF57716">
    <property type="entry name" value="Glucocorticoid receptor-like (DNA-binding domain)"/>
    <property type="match status" value="1"/>
</dbReference>
<dbReference type="PROSITE" id="PS00478">
    <property type="entry name" value="LIM_DOMAIN_1"/>
    <property type="match status" value="1"/>
</dbReference>
<dbReference type="PROSITE" id="PS50023">
    <property type="entry name" value="LIM_DOMAIN_2"/>
    <property type="match status" value="1"/>
</dbReference>
<dbReference type="PROSITE" id="PS51216">
    <property type="entry name" value="NEBULIN"/>
    <property type="match status" value="41"/>
</dbReference>